<dbReference type="EC" id="2.4.1.21" evidence="1"/>
<dbReference type="EMBL" id="CP000435">
    <property type="protein sequence ID" value="ABI46119.1"/>
    <property type="molecule type" value="Genomic_DNA"/>
</dbReference>
<dbReference type="RefSeq" id="WP_011619451.1">
    <property type="nucleotide sequence ID" value="NC_008319.1"/>
</dbReference>
<dbReference type="SMR" id="Q0I9Y8"/>
<dbReference type="STRING" id="64471.sync_1529"/>
<dbReference type="CAZy" id="GT5">
    <property type="family name" value="Glycosyltransferase Family 5"/>
</dbReference>
<dbReference type="KEGG" id="syg:sync_1529"/>
<dbReference type="eggNOG" id="COG0297">
    <property type="taxonomic scope" value="Bacteria"/>
</dbReference>
<dbReference type="HOGENOM" id="CLU_009583_18_2_3"/>
<dbReference type="OrthoDB" id="9808590at2"/>
<dbReference type="UniPathway" id="UPA00164"/>
<dbReference type="Proteomes" id="UP000001961">
    <property type="component" value="Chromosome"/>
</dbReference>
<dbReference type="GO" id="GO:0009011">
    <property type="term" value="F:alpha-1,4-glucan glucosyltransferase (ADP-glucose donor) activity"/>
    <property type="evidence" value="ECO:0007669"/>
    <property type="project" value="UniProtKB-UniRule"/>
</dbReference>
<dbReference type="GO" id="GO:0004373">
    <property type="term" value="F:alpha-1,4-glucan glucosyltransferase (UDP-glucose donor) activity"/>
    <property type="evidence" value="ECO:0007669"/>
    <property type="project" value="InterPro"/>
</dbReference>
<dbReference type="GO" id="GO:0005978">
    <property type="term" value="P:glycogen biosynthetic process"/>
    <property type="evidence" value="ECO:0007669"/>
    <property type="project" value="UniProtKB-UniRule"/>
</dbReference>
<dbReference type="CDD" id="cd03791">
    <property type="entry name" value="GT5_Glycogen_synthase_DULL1-like"/>
    <property type="match status" value="1"/>
</dbReference>
<dbReference type="Gene3D" id="3.40.50.2000">
    <property type="entry name" value="Glycogen Phosphorylase B"/>
    <property type="match status" value="2"/>
</dbReference>
<dbReference type="HAMAP" id="MF_00484">
    <property type="entry name" value="Glycogen_synth"/>
    <property type="match status" value="1"/>
</dbReference>
<dbReference type="InterPro" id="IPR001296">
    <property type="entry name" value="Glyco_trans_1"/>
</dbReference>
<dbReference type="InterPro" id="IPR011835">
    <property type="entry name" value="GS/SS"/>
</dbReference>
<dbReference type="InterPro" id="IPR013534">
    <property type="entry name" value="Starch_synth_cat_dom"/>
</dbReference>
<dbReference type="NCBIfam" id="TIGR02095">
    <property type="entry name" value="glgA"/>
    <property type="match status" value="1"/>
</dbReference>
<dbReference type="NCBIfam" id="NF001900">
    <property type="entry name" value="PRK00654.1-3"/>
    <property type="match status" value="1"/>
</dbReference>
<dbReference type="PANTHER" id="PTHR45825:SF11">
    <property type="entry name" value="ALPHA AMYLASE DOMAIN-CONTAINING PROTEIN"/>
    <property type="match status" value="1"/>
</dbReference>
<dbReference type="PANTHER" id="PTHR45825">
    <property type="entry name" value="GRANULE-BOUND STARCH SYNTHASE 1, CHLOROPLASTIC/AMYLOPLASTIC"/>
    <property type="match status" value="1"/>
</dbReference>
<dbReference type="Pfam" id="PF08323">
    <property type="entry name" value="Glyco_transf_5"/>
    <property type="match status" value="1"/>
</dbReference>
<dbReference type="Pfam" id="PF00534">
    <property type="entry name" value="Glycos_transf_1"/>
    <property type="match status" value="1"/>
</dbReference>
<dbReference type="SUPFAM" id="SSF53756">
    <property type="entry name" value="UDP-Glycosyltransferase/glycogen phosphorylase"/>
    <property type="match status" value="1"/>
</dbReference>
<sequence length="518" mass="58096">MRVLFAAAECAPMVKVGGMGDVVGSLPPALKALGHDVRLIMPGYGKLWSRLEIPAEPIWRGQTMGTEFAVFETRHPTNGLTIYLVGHPVFDPERIYGGEDEDWRFTFFASAAAEFAWNVWKPNVLHCHDWHTGMIPVWMHQDPEISTVYTIHNLKYQGPWRWKLDRMTWCPWYMQGDHTMAAALLYADGVNAVSPTYSREIRTSEYSEKLDGLLNYISGKLRGILNGIDLEAWNPATDRALPATFSADDLSGRARNKQVLQERMGLEVRPDAYLLGMVSRLVDQKGVDLLLQVADRLLAYTDTQIVVLGTGDRGLESGLWQMASRHPGRVSVFLTYDDDLSRLIYAGSDAFLMPSRFEPCGISQLLAMRYGCVPVVRKVGGLVDTVPPHDPAQQSGTGFCFDRFDPVDFFTALVRSWEAFRHQDSWRELQRRGMRQDYSWARSAMEYDQMYREVCGLKEPGPDAAAVEQFSQGQDADPSLAQGQHAAPTSPPEQSSEDLSKGPGSRNPLAKLFGGQRR</sequence>
<proteinExistence type="inferred from homology"/>
<feature type="chain" id="PRO_1000014388" description="Glycogen synthase">
    <location>
        <begin position="1"/>
        <end position="518"/>
    </location>
</feature>
<feature type="region of interest" description="Disordered" evidence="2">
    <location>
        <begin position="469"/>
        <end position="518"/>
    </location>
</feature>
<feature type="binding site" evidence="1">
    <location>
        <position position="15"/>
    </location>
    <ligand>
        <name>ADP-alpha-D-glucose</name>
        <dbReference type="ChEBI" id="CHEBI:57498"/>
    </ligand>
</feature>
<reference key="1">
    <citation type="journal article" date="2006" name="Proc. Natl. Acad. Sci. U.S.A.">
        <title>Genome sequence of Synechococcus CC9311: insights into adaptation to a coastal environment.</title>
        <authorList>
            <person name="Palenik B."/>
            <person name="Ren Q."/>
            <person name="Dupont C.L."/>
            <person name="Myers G.S."/>
            <person name="Heidelberg J.F."/>
            <person name="Badger J.H."/>
            <person name="Madupu R."/>
            <person name="Nelson W.C."/>
            <person name="Brinkac L.M."/>
            <person name="Dodson R.J."/>
            <person name="Durkin A.S."/>
            <person name="Daugherty S.C."/>
            <person name="Sullivan S.A."/>
            <person name="Khouri H."/>
            <person name="Mohamoud Y."/>
            <person name="Halpin R."/>
            <person name="Paulsen I.T."/>
        </authorList>
    </citation>
    <scope>NUCLEOTIDE SEQUENCE [LARGE SCALE GENOMIC DNA]</scope>
    <source>
        <strain>CC9311</strain>
    </source>
</reference>
<keyword id="KW-0320">Glycogen biosynthesis</keyword>
<keyword id="KW-0328">Glycosyltransferase</keyword>
<keyword id="KW-1185">Reference proteome</keyword>
<keyword id="KW-0808">Transferase</keyword>
<gene>
    <name evidence="1" type="primary">glgA</name>
    <name type="ordered locus">sync_1529</name>
</gene>
<protein>
    <recommendedName>
        <fullName evidence="1">Glycogen synthase</fullName>
        <ecNumber evidence="1">2.4.1.21</ecNumber>
    </recommendedName>
    <alternativeName>
        <fullName evidence="1">Starch [bacterial glycogen] synthase</fullName>
    </alternativeName>
</protein>
<comment type="function">
    <text evidence="1">Synthesizes alpha-1,4-glucan chains using ADP-glucose.</text>
</comment>
<comment type="catalytic activity">
    <reaction evidence="1">
        <text>[(1-&gt;4)-alpha-D-glucosyl](n) + ADP-alpha-D-glucose = [(1-&gt;4)-alpha-D-glucosyl](n+1) + ADP + H(+)</text>
        <dbReference type="Rhea" id="RHEA:18189"/>
        <dbReference type="Rhea" id="RHEA-COMP:9584"/>
        <dbReference type="Rhea" id="RHEA-COMP:9587"/>
        <dbReference type="ChEBI" id="CHEBI:15378"/>
        <dbReference type="ChEBI" id="CHEBI:15444"/>
        <dbReference type="ChEBI" id="CHEBI:57498"/>
        <dbReference type="ChEBI" id="CHEBI:456216"/>
        <dbReference type="EC" id="2.4.1.21"/>
    </reaction>
</comment>
<comment type="pathway">
    <text evidence="1">Glycan biosynthesis; glycogen biosynthesis.</text>
</comment>
<comment type="similarity">
    <text evidence="1">Belongs to the glycosyltransferase 1 family. Bacterial/plant glycogen synthase subfamily.</text>
</comment>
<name>GLGA_SYNS3</name>
<evidence type="ECO:0000255" key="1">
    <source>
        <dbReference type="HAMAP-Rule" id="MF_00484"/>
    </source>
</evidence>
<evidence type="ECO:0000256" key="2">
    <source>
        <dbReference type="SAM" id="MobiDB-lite"/>
    </source>
</evidence>
<accession>Q0I9Y8</accession>
<organism>
    <name type="scientific">Synechococcus sp. (strain CC9311)</name>
    <dbReference type="NCBI Taxonomy" id="64471"/>
    <lineage>
        <taxon>Bacteria</taxon>
        <taxon>Bacillati</taxon>
        <taxon>Cyanobacteriota</taxon>
        <taxon>Cyanophyceae</taxon>
        <taxon>Synechococcales</taxon>
        <taxon>Synechococcaceae</taxon>
        <taxon>Synechococcus</taxon>
    </lineage>
</organism>